<reference key="1">
    <citation type="journal article" date="2006" name="FEBS J.">
        <title>Cytochrome P450 Cyp4x1 is a major P450 protein in mouse brain.</title>
        <authorList>
            <person name="Al-Anizy M."/>
            <person name="Horley N.J."/>
            <person name="Kuo C.W."/>
            <person name="Gillett L.C."/>
            <person name="Laughton C.A."/>
            <person name="Kendall D."/>
            <person name="Barrett D.A."/>
            <person name="Parker T."/>
            <person name="Bell D.R."/>
        </authorList>
    </citation>
    <scope>NUCLEOTIDE SEQUENCE [MRNA] (ISOFORM 1)</scope>
    <scope>TISSUE SPECIFICITY</scope>
    <source>
        <tissue>Aorta</tissue>
    </source>
</reference>
<reference key="2">
    <citation type="journal article" date="2003" name="Genome Res.">
        <title>The secreted protein discovery initiative (SPDI), a large-scale effort to identify novel human secreted and transmembrane proteins: a bioinformatics assessment.</title>
        <authorList>
            <person name="Clark H.F."/>
            <person name="Gurney A.L."/>
            <person name="Abaya E."/>
            <person name="Baker K."/>
            <person name="Baldwin D.T."/>
            <person name="Brush J."/>
            <person name="Chen J."/>
            <person name="Chow B."/>
            <person name="Chui C."/>
            <person name="Crowley C."/>
            <person name="Currell B."/>
            <person name="Deuel B."/>
            <person name="Dowd P."/>
            <person name="Eaton D."/>
            <person name="Foster J.S."/>
            <person name="Grimaldi C."/>
            <person name="Gu Q."/>
            <person name="Hass P.E."/>
            <person name="Heldens S."/>
            <person name="Huang A."/>
            <person name="Kim H.S."/>
            <person name="Klimowski L."/>
            <person name="Jin Y."/>
            <person name="Johnson S."/>
            <person name="Lee J."/>
            <person name="Lewis L."/>
            <person name="Liao D."/>
            <person name="Mark M.R."/>
            <person name="Robbie E."/>
            <person name="Sanchez C."/>
            <person name="Schoenfeld J."/>
            <person name="Seshagiri S."/>
            <person name="Simmons L."/>
            <person name="Singh J."/>
            <person name="Smith V."/>
            <person name="Stinson J."/>
            <person name="Vagts A."/>
            <person name="Vandlen R.L."/>
            <person name="Watanabe C."/>
            <person name="Wieand D."/>
            <person name="Woods K."/>
            <person name="Xie M.-H."/>
            <person name="Yansura D.G."/>
            <person name="Yi S."/>
            <person name="Yu G."/>
            <person name="Yuan J."/>
            <person name="Zhang M."/>
            <person name="Zhang Z."/>
            <person name="Goddard A.D."/>
            <person name="Wood W.I."/>
            <person name="Godowski P.J."/>
            <person name="Gray A.M."/>
        </authorList>
    </citation>
    <scope>NUCLEOTIDE SEQUENCE [LARGE SCALE MRNA] (ISOFORM 1)</scope>
</reference>
<reference key="3">
    <citation type="journal article" date="2004" name="Nat. Genet.">
        <title>Complete sequencing and characterization of 21,243 full-length human cDNAs.</title>
        <authorList>
            <person name="Ota T."/>
            <person name="Suzuki Y."/>
            <person name="Nishikawa T."/>
            <person name="Otsuki T."/>
            <person name="Sugiyama T."/>
            <person name="Irie R."/>
            <person name="Wakamatsu A."/>
            <person name="Hayashi K."/>
            <person name="Sato H."/>
            <person name="Nagai K."/>
            <person name="Kimura K."/>
            <person name="Makita H."/>
            <person name="Sekine M."/>
            <person name="Obayashi M."/>
            <person name="Nishi T."/>
            <person name="Shibahara T."/>
            <person name="Tanaka T."/>
            <person name="Ishii S."/>
            <person name="Yamamoto J."/>
            <person name="Saito K."/>
            <person name="Kawai Y."/>
            <person name="Isono Y."/>
            <person name="Nakamura Y."/>
            <person name="Nagahari K."/>
            <person name="Murakami K."/>
            <person name="Yasuda T."/>
            <person name="Iwayanagi T."/>
            <person name="Wagatsuma M."/>
            <person name="Shiratori A."/>
            <person name="Sudo H."/>
            <person name="Hosoiri T."/>
            <person name="Kaku Y."/>
            <person name="Kodaira H."/>
            <person name="Kondo H."/>
            <person name="Sugawara M."/>
            <person name="Takahashi M."/>
            <person name="Kanda K."/>
            <person name="Yokoi T."/>
            <person name="Furuya T."/>
            <person name="Kikkawa E."/>
            <person name="Omura Y."/>
            <person name="Abe K."/>
            <person name="Kamihara K."/>
            <person name="Katsuta N."/>
            <person name="Sato K."/>
            <person name="Tanikawa M."/>
            <person name="Yamazaki M."/>
            <person name="Ninomiya K."/>
            <person name="Ishibashi T."/>
            <person name="Yamashita H."/>
            <person name="Murakawa K."/>
            <person name="Fujimori K."/>
            <person name="Tanai H."/>
            <person name="Kimata M."/>
            <person name="Watanabe M."/>
            <person name="Hiraoka S."/>
            <person name="Chiba Y."/>
            <person name="Ishida S."/>
            <person name="Ono Y."/>
            <person name="Takiguchi S."/>
            <person name="Watanabe S."/>
            <person name="Yosida M."/>
            <person name="Hotuta T."/>
            <person name="Kusano J."/>
            <person name="Kanehori K."/>
            <person name="Takahashi-Fujii A."/>
            <person name="Hara H."/>
            <person name="Tanase T.-O."/>
            <person name="Nomura Y."/>
            <person name="Togiya S."/>
            <person name="Komai F."/>
            <person name="Hara R."/>
            <person name="Takeuchi K."/>
            <person name="Arita M."/>
            <person name="Imose N."/>
            <person name="Musashino K."/>
            <person name="Yuuki H."/>
            <person name="Oshima A."/>
            <person name="Sasaki N."/>
            <person name="Aotsuka S."/>
            <person name="Yoshikawa Y."/>
            <person name="Matsunawa H."/>
            <person name="Ichihara T."/>
            <person name="Shiohata N."/>
            <person name="Sano S."/>
            <person name="Moriya S."/>
            <person name="Momiyama H."/>
            <person name="Satoh N."/>
            <person name="Takami S."/>
            <person name="Terashima Y."/>
            <person name="Suzuki O."/>
            <person name="Nakagawa S."/>
            <person name="Senoh A."/>
            <person name="Mizoguchi H."/>
            <person name="Goto Y."/>
            <person name="Shimizu F."/>
            <person name="Wakebe H."/>
            <person name="Hishigaki H."/>
            <person name="Watanabe T."/>
            <person name="Sugiyama A."/>
            <person name="Takemoto M."/>
            <person name="Kawakami B."/>
            <person name="Yamazaki M."/>
            <person name="Watanabe K."/>
            <person name="Kumagai A."/>
            <person name="Itakura S."/>
            <person name="Fukuzumi Y."/>
            <person name="Fujimori Y."/>
            <person name="Komiyama M."/>
            <person name="Tashiro H."/>
            <person name="Tanigami A."/>
            <person name="Fujiwara T."/>
            <person name="Ono T."/>
            <person name="Yamada K."/>
            <person name="Fujii Y."/>
            <person name="Ozaki K."/>
            <person name="Hirao M."/>
            <person name="Ohmori Y."/>
            <person name="Kawabata A."/>
            <person name="Hikiji T."/>
            <person name="Kobatake N."/>
            <person name="Inagaki H."/>
            <person name="Ikema Y."/>
            <person name="Okamoto S."/>
            <person name="Okitani R."/>
            <person name="Kawakami T."/>
            <person name="Noguchi S."/>
            <person name="Itoh T."/>
            <person name="Shigeta K."/>
            <person name="Senba T."/>
            <person name="Matsumura K."/>
            <person name="Nakajima Y."/>
            <person name="Mizuno T."/>
            <person name="Morinaga M."/>
            <person name="Sasaki M."/>
            <person name="Togashi T."/>
            <person name="Oyama M."/>
            <person name="Hata H."/>
            <person name="Watanabe M."/>
            <person name="Komatsu T."/>
            <person name="Mizushima-Sugano J."/>
            <person name="Satoh T."/>
            <person name="Shirai Y."/>
            <person name="Takahashi Y."/>
            <person name="Nakagawa K."/>
            <person name="Okumura K."/>
            <person name="Nagase T."/>
            <person name="Nomura N."/>
            <person name="Kikuchi H."/>
            <person name="Masuho Y."/>
            <person name="Yamashita R."/>
            <person name="Nakai K."/>
            <person name="Yada T."/>
            <person name="Nakamura Y."/>
            <person name="Ohara O."/>
            <person name="Isogai T."/>
            <person name="Sugano S."/>
        </authorList>
    </citation>
    <scope>NUCLEOTIDE SEQUENCE [LARGE SCALE MRNA] (ISOFORMS 1; 2 AND 3)</scope>
    <source>
        <tissue>Liver</tissue>
        <tissue>Lung</tissue>
        <tissue>Trachea</tissue>
    </source>
</reference>
<reference key="4">
    <citation type="journal article" date="2006" name="Nature">
        <title>The DNA sequence and biological annotation of human chromosome 1.</title>
        <authorList>
            <person name="Gregory S.G."/>
            <person name="Barlow K.F."/>
            <person name="McLay K.E."/>
            <person name="Kaul R."/>
            <person name="Swarbreck D."/>
            <person name="Dunham A."/>
            <person name="Scott C.E."/>
            <person name="Howe K.L."/>
            <person name="Woodfine K."/>
            <person name="Spencer C.C.A."/>
            <person name="Jones M.C."/>
            <person name="Gillson C."/>
            <person name="Searle S."/>
            <person name="Zhou Y."/>
            <person name="Kokocinski F."/>
            <person name="McDonald L."/>
            <person name="Evans R."/>
            <person name="Phillips K."/>
            <person name="Atkinson A."/>
            <person name="Cooper R."/>
            <person name="Jones C."/>
            <person name="Hall R.E."/>
            <person name="Andrews T.D."/>
            <person name="Lloyd C."/>
            <person name="Ainscough R."/>
            <person name="Almeida J.P."/>
            <person name="Ambrose K.D."/>
            <person name="Anderson F."/>
            <person name="Andrew R.W."/>
            <person name="Ashwell R.I.S."/>
            <person name="Aubin K."/>
            <person name="Babbage A.K."/>
            <person name="Bagguley C.L."/>
            <person name="Bailey J."/>
            <person name="Beasley H."/>
            <person name="Bethel G."/>
            <person name="Bird C.P."/>
            <person name="Bray-Allen S."/>
            <person name="Brown J.Y."/>
            <person name="Brown A.J."/>
            <person name="Buckley D."/>
            <person name="Burton J."/>
            <person name="Bye J."/>
            <person name="Carder C."/>
            <person name="Chapman J.C."/>
            <person name="Clark S.Y."/>
            <person name="Clarke G."/>
            <person name="Clee C."/>
            <person name="Cobley V."/>
            <person name="Collier R.E."/>
            <person name="Corby N."/>
            <person name="Coville G.J."/>
            <person name="Davies J."/>
            <person name="Deadman R."/>
            <person name="Dunn M."/>
            <person name="Earthrowl M."/>
            <person name="Ellington A.G."/>
            <person name="Errington H."/>
            <person name="Frankish A."/>
            <person name="Frankland J."/>
            <person name="French L."/>
            <person name="Garner P."/>
            <person name="Garnett J."/>
            <person name="Gay L."/>
            <person name="Ghori M.R.J."/>
            <person name="Gibson R."/>
            <person name="Gilby L.M."/>
            <person name="Gillett W."/>
            <person name="Glithero R.J."/>
            <person name="Grafham D.V."/>
            <person name="Griffiths C."/>
            <person name="Griffiths-Jones S."/>
            <person name="Grocock R."/>
            <person name="Hammond S."/>
            <person name="Harrison E.S.I."/>
            <person name="Hart E."/>
            <person name="Haugen E."/>
            <person name="Heath P.D."/>
            <person name="Holmes S."/>
            <person name="Holt K."/>
            <person name="Howden P.J."/>
            <person name="Hunt A.R."/>
            <person name="Hunt S.E."/>
            <person name="Hunter G."/>
            <person name="Isherwood J."/>
            <person name="James R."/>
            <person name="Johnson C."/>
            <person name="Johnson D."/>
            <person name="Joy A."/>
            <person name="Kay M."/>
            <person name="Kershaw J.K."/>
            <person name="Kibukawa M."/>
            <person name="Kimberley A.M."/>
            <person name="King A."/>
            <person name="Knights A.J."/>
            <person name="Lad H."/>
            <person name="Laird G."/>
            <person name="Lawlor S."/>
            <person name="Leongamornlert D.A."/>
            <person name="Lloyd D.M."/>
            <person name="Loveland J."/>
            <person name="Lovell J."/>
            <person name="Lush M.J."/>
            <person name="Lyne R."/>
            <person name="Martin S."/>
            <person name="Mashreghi-Mohammadi M."/>
            <person name="Matthews L."/>
            <person name="Matthews N.S.W."/>
            <person name="McLaren S."/>
            <person name="Milne S."/>
            <person name="Mistry S."/>
            <person name="Moore M.J.F."/>
            <person name="Nickerson T."/>
            <person name="O'Dell C.N."/>
            <person name="Oliver K."/>
            <person name="Palmeiri A."/>
            <person name="Palmer S.A."/>
            <person name="Parker A."/>
            <person name="Patel D."/>
            <person name="Pearce A.V."/>
            <person name="Peck A.I."/>
            <person name="Pelan S."/>
            <person name="Phelps K."/>
            <person name="Phillimore B.J."/>
            <person name="Plumb R."/>
            <person name="Rajan J."/>
            <person name="Raymond C."/>
            <person name="Rouse G."/>
            <person name="Saenphimmachak C."/>
            <person name="Sehra H.K."/>
            <person name="Sheridan E."/>
            <person name="Shownkeen R."/>
            <person name="Sims S."/>
            <person name="Skuce C.D."/>
            <person name="Smith M."/>
            <person name="Steward C."/>
            <person name="Subramanian S."/>
            <person name="Sycamore N."/>
            <person name="Tracey A."/>
            <person name="Tromans A."/>
            <person name="Van Helmond Z."/>
            <person name="Wall M."/>
            <person name="Wallis J.M."/>
            <person name="White S."/>
            <person name="Whitehead S.L."/>
            <person name="Wilkinson J.E."/>
            <person name="Willey D.L."/>
            <person name="Williams H."/>
            <person name="Wilming L."/>
            <person name="Wray P.W."/>
            <person name="Wu Z."/>
            <person name="Coulson A."/>
            <person name="Vaudin M."/>
            <person name="Sulston J.E."/>
            <person name="Durbin R.M."/>
            <person name="Hubbard T."/>
            <person name="Wooster R."/>
            <person name="Dunham I."/>
            <person name="Carter N.P."/>
            <person name="McVean G."/>
            <person name="Ross M.T."/>
            <person name="Harrow J."/>
            <person name="Olson M.V."/>
            <person name="Beck S."/>
            <person name="Rogers J."/>
            <person name="Bentley D.R."/>
        </authorList>
    </citation>
    <scope>NUCLEOTIDE SEQUENCE [LARGE SCALE GENOMIC DNA]</scope>
</reference>
<reference key="5">
    <citation type="submission" date="2005-09" db="EMBL/GenBank/DDBJ databases">
        <authorList>
            <person name="Mural R.J."/>
            <person name="Istrail S."/>
            <person name="Sutton G.G."/>
            <person name="Florea L."/>
            <person name="Halpern A.L."/>
            <person name="Mobarry C.M."/>
            <person name="Lippert R."/>
            <person name="Walenz B."/>
            <person name="Shatkay H."/>
            <person name="Dew I."/>
            <person name="Miller J.R."/>
            <person name="Flanigan M.J."/>
            <person name="Edwards N.J."/>
            <person name="Bolanos R."/>
            <person name="Fasulo D."/>
            <person name="Halldorsson B.V."/>
            <person name="Hannenhalli S."/>
            <person name="Turner R."/>
            <person name="Yooseph S."/>
            <person name="Lu F."/>
            <person name="Nusskern D.R."/>
            <person name="Shue B.C."/>
            <person name="Zheng X.H."/>
            <person name="Zhong F."/>
            <person name="Delcher A.L."/>
            <person name="Huson D.H."/>
            <person name="Kravitz S.A."/>
            <person name="Mouchard L."/>
            <person name="Reinert K."/>
            <person name="Remington K.A."/>
            <person name="Clark A.G."/>
            <person name="Waterman M.S."/>
            <person name="Eichler E.E."/>
            <person name="Adams M.D."/>
            <person name="Hunkapiller M.W."/>
            <person name="Myers E.W."/>
            <person name="Venter J.C."/>
        </authorList>
    </citation>
    <scope>NUCLEOTIDE SEQUENCE [LARGE SCALE GENOMIC DNA]</scope>
</reference>
<reference key="6">
    <citation type="journal article" date="2004" name="Genome Res.">
        <title>The status, quality, and expansion of the NIH full-length cDNA project: the Mammalian Gene Collection (MGC).</title>
        <authorList>
            <consortium name="The MGC Project Team"/>
        </authorList>
    </citation>
    <scope>NUCLEOTIDE SEQUENCE [LARGE SCALE MRNA] (ISOFORM 1)</scope>
    <source>
        <tissue>Brain</tissue>
    </source>
</reference>
<reference key="7">
    <citation type="journal article" date="2008" name="FEBS J.">
        <title>Expression and purification of orphan cytochrome P450 4X1 and oxidation of anandamide.</title>
        <authorList>
            <person name="Stark K."/>
            <person name="Dostalek M."/>
            <person name="Guengerich F.P."/>
        </authorList>
    </citation>
    <scope>FUNCTION</scope>
    <scope>CATALYTIC ACTIVITY</scope>
    <scope>BIOPHYSICOCHEMICAL PROPERTIES</scope>
    <scope>TISSUE SPECIFICITY</scope>
    <scope>DEVELOPMENTAL STAGE</scope>
</reference>
<keyword id="KW-0025">Alternative splicing</keyword>
<keyword id="KW-0256">Endoplasmic reticulum</keyword>
<keyword id="KW-0349">Heme</keyword>
<keyword id="KW-0408">Iron</keyword>
<keyword id="KW-0443">Lipid metabolism</keyword>
<keyword id="KW-0472">Membrane</keyword>
<keyword id="KW-0479">Metal-binding</keyword>
<keyword id="KW-0492">Microsome</keyword>
<keyword id="KW-0503">Monooxygenase</keyword>
<keyword id="KW-0560">Oxidoreductase</keyword>
<keyword id="KW-1267">Proteomics identification</keyword>
<keyword id="KW-1185">Reference proteome</keyword>
<keyword id="KW-0812">Transmembrane</keyword>
<keyword id="KW-1133">Transmembrane helix</keyword>
<dbReference type="EC" id="1.14.14.-" evidence="5"/>
<dbReference type="EMBL" id="AM040940">
    <property type="protein sequence ID" value="CAJ13826.1"/>
    <property type="molecule type" value="mRNA"/>
</dbReference>
<dbReference type="EMBL" id="AY358537">
    <property type="protein sequence ID" value="AAQ88901.1"/>
    <property type="molecule type" value="mRNA"/>
</dbReference>
<dbReference type="EMBL" id="AK091806">
    <property type="protein sequence ID" value="BAC03751.1"/>
    <property type="molecule type" value="mRNA"/>
</dbReference>
<dbReference type="EMBL" id="AK098065">
    <property type="protein sequence ID" value="BAC05226.1"/>
    <property type="molecule type" value="mRNA"/>
</dbReference>
<dbReference type="EMBL" id="AK131355">
    <property type="protein sequence ID" value="BAD18508.1"/>
    <property type="molecule type" value="mRNA"/>
</dbReference>
<dbReference type="EMBL" id="AL450996">
    <property type="status" value="NOT_ANNOTATED_CDS"/>
    <property type="molecule type" value="Genomic_DNA"/>
</dbReference>
<dbReference type="EMBL" id="AL731892">
    <property type="status" value="NOT_ANNOTATED_CDS"/>
    <property type="molecule type" value="Genomic_DNA"/>
</dbReference>
<dbReference type="EMBL" id="CH471059">
    <property type="protein sequence ID" value="EAX06882.1"/>
    <property type="molecule type" value="Genomic_DNA"/>
</dbReference>
<dbReference type="EMBL" id="CH471059">
    <property type="protein sequence ID" value="EAX06883.1"/>
    <property type="molecule type" value="Genomic_DNA"/>
</dbReference>
<dbReference type="EMBL" id="CH471059">
    <property type="protein sequence ID" value="EAX06884.1"/>
    <property type="molecule type" value="Genomic_DNA"/>
</dbReference>
<dbReference type="EMBL" id="BC028102">
    <property type="protein sequence ID" value="AAH28102.1"/>
    <property type="molecule type" value="mRNA"/>
</dbReference>
<dbReference type="CCDS" id="CCDS544.1">
    <molecule id="Q8N118-1"/>
</dbReference>
<dbReference type="RefSeq" id="NP_001307218.1">
    <molecule id="Q8N118-2"/>
    <property type="nucleotide sequence ID" value="NM_001320289.2"/>
</dbReference>
<dbReference type="RefSeq" id="NP_001307219.1">
    <molecule id="Q8N118-3"/>
    <property type="nucleotide sequence ID" value="NM_001320290.2"/>
</dbReference>
<dbReference type="RefSeq" id="NP_828847.1">
    <molecule id="Q8N118-1"/>
    <property type="nucleotide sequence ID" value="NM_178033.2"/>
</dbReference>
<dbReference type="SMR" id="Q8N118"/>
<dbReference type="BioGRID" id="129254">
    <property type="interactions" value="16"/>
</dbReference>
<dbReference type="FunCoup" id="Q8N118">
    <property type="interactions" value="169"/>
</dbReference>
<dbReference type="IntAct" id="Q8N118">
    <property type="interactions" value="1"/>
</dbReference>
<dbReference type="STRING" id="9606.ENSP00000360968"/>
<dbReference type="BindingDB" id="Q8N118"/>
<dbReference type="ChEMBL" id="CHEMBL6048"/>
<dbReference type="SwissLipids" id="SLP:000001715"/>
<dbReference type="iPTMnet" id="Q8N118"/>
<dbReference type="PhosphoSitePlus" id="Q8N118"/>
<dbReference type="SwissPalm" id="Q8N118"/>
<dbReference type="BioMuta" id="CYP4X1"/>
<dbReference type="DMDM" id="48428082"/>
<dbReference type="jPOST" id="Q8N118"/>
<dbReference type="MassIVE" id="Q8N118"/>
<dbReference type="PaxDb" id="9606-ENSP00000360968"/>
<dbReference type="PeptideAtlas" id="Q8N118"/>
<dbReference type="ProteomicsDB" id="32441"/>
<dbReference type="ProteomicsDB" id="71519">
    <molecule id="Q8N118-1"/>
</dbReference>
<dbReference type="Pumba" id="Q8N118"/>
<dbReference type="Antibodypedia" id="32842">
    <property type="antibodies" value="205 antibodies from 26 providers"/>
</dbReference>
<dbReference type="DNASU" id="260293"/>
<dbReference type="Ensembl" id="ENST00000371901.4">
    <molecule id="Q8N118-1"/>
    <property type="protein sequence ID" value="ENSP00000360968.3"/>
    <property type="gene ID" value="ENSG00000186377.8"/>
</dbReference>
<dbReference type="GeneID" id="260293"/>
<dbReference type="KEGG" id="hsa:260293"/>
<dbReference type="MANE-Select" id="ENST00000371901.4">
    <property type="protein sequence ID" value="ENSP00000360968.3"/>
    <property type="RefSeq nucleotide sequence ID" value="NM_178033.2"/>
    <property type="RefSeq protein sequence ID" value="NP_828847.1"/>
</dbReference>
<dbReference type="UCSC" id="uc001cqt.3">
    <molecule id="Q8N118-1"/>
    <property type="organism name" value="human"/>
</dbReference>
<dbReference type="AGR" id="HGNC:20244"/>
<dbReference type="CTD" id="260293"/>
<dbReference type="DisGeNET" id="260293"/>
<dbReference type="GeneCards" id="CYP4X1"/>
<dbReference type="HGNC" id="HGNC:20244">
    <property type="gene designation" value="CYP4X1"/>
</dbReference>
<dbReference type="HPA" id="ENSG00000186377">
    <property type="expression patterns" value="Tissue enhanced (cervix, salivary gland)"/>
</dbReference>
<dbReference type="MIM" id="614999">
    <property type="type" value="gene"/>
</dbReference>
<dbReference type="neXtProt" id="NX_Q8N118"/>
<dbReference type="OpenTargets" id="ENSG00000186377"/>
<dbReference type="PharmGKB" id="PA134933184"/>
<dbReference type="VEuPathDB" id="HostDB:ENSG00000186377"/>
<dbReference type="eggNOG" id="KOG0157">
    <property type="taxonomic scope" value="Eukaryota"/>
</dbReference>
<dbReference type="GeneTree" id="ENSGT00940000160927"/>
<dbReference type="HOGENOM" id="CLU_001570_5_1_1"/>
<dbReference type="InParanoid" id="Q8N118"/>
<dbReference type="OMA" id="VLHQYTE"/>
<dbReference type="OrthoDB" id="1470350at2759"/>
<dbReference type="PAN-GO" id="Q8N118">
    <property type="GO annotations" value="0 GO annotations based on evolutionary models"/>
</dbReference>
<dbReference type="PhylomeDB" id="Q8N118"/>
<dbReference type="TreeFam" id="TF105088"/>
<dbReference type="PathwayCommons" id="Q8N118"/>
<dbReference type="SignaLink" id="Q8N118"/>
<dbReference type="BioGRID-ORCS" id="260293">
    <property type="hits" value="23 hits in 1150 CRISPR screens"/>
</dbReference>
<dbReference type="ChiTaRS" id="CYP4X1">
    <property type="organism name" value="human"/>
</dbReference>
<dbReference type="GeneWiki" id="CYP4X1"/>
<dbReference type="GenomeRNAi" id="260293"/>
<dbReference type="Pharos" id="Q8N118">
    <property type="development level" value="Tbio"/>
</dbReference>
<dbReference type="PRO" id="PR:Q8N118"/>
<dbReference type="Proteomes" id="UP000005640">
    <property type="component" value="Chromosome 1"/>
</dbReference>
<dbReference type="RNAct" id="Q8N118">
    <property type="molecule type" value="protein"/>
</dbReference>
<dbReference type="Bgee" id="ENSG00000186377">
    <property type="expression patterns" value="Expressed in palpebral conjunctiva and 175 other cell types or tissues"/>
</dbReference>
<dbReference type="GO" id="GO:0005789">
    <property type="term" value="C:endoplasmic reticulum membrane"/>
    <property type="evidence" value="ECO:0007669"/>
    <property type="project" value="UniProtKB-SubCell"/>
</dbReference>
<dbReference type="GO" id="GO:0062189">
    <property type="term" value="F:anandamide 14,15 epoxidase activity"/>
    <property type="evidence" value="ECO:0000314"/>
    <property type="project" value="UniProtKB"/>
</dbReference>
<dbReference type="GO" id="GO:0020037">
    <property type="term" value="F:heme binding"/>
    <property type="evidence" value="ECO:0007669"/>
    <property type="project" value="InterPro"/>
</dbReference>
<dbReference type="GO" id="GO:0005506">
    <property type="term" value="F:iron ion binding"/>
    <property type="evidence" value="ECO:0007669"/>
    <property type="project" value="InterPro"/>
</dbReference>
<dbReference type="GO" id="GO:0006629">
    <property type="term" value="P:lipid metabolic process"/>
    <property type="evidence" value="ECO:0007669"/>
    <property type="project" value="UniProtKB-KW"/>
</dbReference>
<dbReference type="CDD" id="cd20678">
    <property type="entry name" value="CYP4B-like"/>
    <property type="match status" value="1"/>
</dbReference>
<dbReference type="FunFam" id="1.10.630.10:FF:000005">
    <property type="entry name" value="cytochrome P450 4F22 isoform X2"/>
    <property type="match status" value="1"/>
</dbReference>
<dbReference type="Gene3D" id="1.10.630.10">
    <property type="entry name" value="Cytochrome P450"/>
    <property type="match status" value="1"/>
</dbReference>
<dbReference type="InterPro" id="IPR001128">
    <property type="entry name" value="Cyt_P450"/>
</dbReference>
<dbReference type="InterPro" id="IPR017972">
    <property type="entry name" value="Cyt_P450_CS"/>
</dbReference>
<dbReference type="InterPro" id="IPR002401">
    <property type="entry name" value="Cyt_P450_E_grp-I"/>
</dbReference>
<dbReference type="InterPro" id="IPR036396">
    <property type="entry name" value="Cyt_P450_sf"/>
</dbReference>
<dbReference type="InterPro" id="IPR050196">
    <property type="entry name" value="Cytochrome_P450_Monoox"/>
</dbReference>
<dbReference type="PANTHER" id="PTHR24291:SF63">
    <property type="entry name" value="CYTOCHROME P450 4X1-RELATED"/>
    <property type="match status" value="1"/>
</dbReference>
<dbReference type="PANTHER" id="PTHR24291">
    <property type="entry name" value="CYTOCHROME P450 FAMILY 4"/>
    <property type="match status" value="1"/>
</dbReference>
<dbReference type="Pfam" id="PF00067">
    <property type="entry name" value="p450"/>
    <property type="match status" value="1"/>
</dbReference>
<dbReference type="PRINTS" id="PR00463">
    <property type="entry name" value="EP450I"/>
</dbReference>
<dbReference type="PRINTS" id="PR00385">
    <property type="entry name" value="P450"/>
</dbReference>
<dbReference type="SUPFAM" id="SSF48264">
    <property type="entry name" value="Cytochrome P450"/>
    <property type="match status" value="1"/>
</dbReference>
<dbReference type="PROSITE" id="PS00086">
    <property type="entry name" value="CYTOCHROME_P450"/>
    <property type="match status" value="1"/>
</dbReference>
<sequence length="509" mass="58875">MEFSWLETRWARPFYLAFVFCLALGLLQAIKLYLRRQRLLRDLRPFPAPPTHWFLGHQKFIQDDNMEKLEEIIEKYPRAFPFWIGPFQAFFCIYDPDYAKTLLSRTDPKSQYLQKFSPPLLGKGLAALDGPKWFQHRRLLTPGFHFNILKAYIEVMAHSVKMMLDKWEKICSTQDTSVEVYEHINSMSLDIIMKCAFSKETNCQTNSTHDPYAKAIFELSKIIFHRLYSLLYHSDIIFKLSPQGYRFQKLSRVLNQYTDTIIQERKKSLQAGVKQDNTPKRKYQDFLDIVLSAKDESGSSFSDIDVHSEVSTFLLAGHDTLAASISWILYCLALNPEHQERCREEVRGILGDGSSITWDQLGEMSYTTMCIKETCRLIPAVPSISRDLSKPLTFPDGCTLPAGITVVLSIWGLHHNPAVWKNPKVFDPLRFSQENSDQRHPYAYLPFSAGSRNCIGQEFAMIELKVTIALILLHFRVTPDPTRPLTFPNHFILKPKNGMYLHLKKLSEC</sequence>
<feature type="chain" id="PRO_0000051862" description="Cytochrome P450 4X1">
    <location>
        <begin position="1"/>
        <end position="509"/>
    </location>
</feature>
<feature type="transmembrane region" description="Helical" evidence="3">
    <location>
        <begin position="14"/>
        <end position="34"/>
    </location>
</feature>
<feature type="binding site" description="axial binding residue" evidence="1">
    <location>
        <position position="454"/>
    </location>
    <ligand>
        <name>heme</name>
        <dbReference type="ChEBI" id="CHEBI:30413"/>
    </ligand>
    <ligandPart>
        <name>Fe</name>
        <dbReference type="ChEBI" id="CHEBI:18248"/>
    </ligandPart>
</feature>
<feature type="splice variant" id="VSP_045889" description="In isoform 3." evidence="6">
    <location>
        <begin position="1"/>
        <end position="65"/>
    </location>
</feature>
<feature type="splice variant" id="VSP_045890" description="In isoform 2." evidence="6">
    <original>MEFSWLETRWARPFYLAFVFCLALGLLQAIKLYLRRQRLLRDLRPFPAPPTHWFLGHQK</original>
    <variation>MMWGGGLDLCPMPGQLKFPPCLSRCLLWEPPSLYLTQPTSSLAEPQALICMTSSSSGL</variation>
    <location>
        <begin position="1"/>
        <end position="59"/>
    </location>
</feature>
<feature type="sequence conflict" description="In Ref. 3; BAD18508." evidence="8" ref="3">
    <original>I</original>
    <variation>V</variation>
    <location>
        <position position="192"/>
    </location>
</feature>
<name>CP4X1_HUMAN</name>
<comment type="function">
    <text evidence="5">A cytochrome P450 monooxygenase that selectively catalyzes the epoxidation of the last double bond of the arachidonoyl moiety of anandamide, potentially modulating endocannabinoid signaling. Has no hydroxylase activity toward various fatty acids, steroids and prostaglandins. Mechanistically, uses molecular oxygen inserting one oxygen atom into a substrate, and reducing the second into a water molecule, with two electrons provided by NADPH via cytochrome P450 reductase (CPR; NADPH-ferrihemoprotein reductase).</text>
</comment>
<comment type="catalytic activity">
    <reaction evidence="5">
        <text>N-(5Z,8Z,11Z,14Z-eicosatetraenoyl)-ethanolamine + reduced [NADPH--hemoprotein reductase] + O2 = N-(14,15-epoxy-5Z,8Z,11Z-eicosatrienoyl)-ethanolamine + oxidized [NADPH--hemoprotein reductase] + H2O + H(+)</text>
        <dbReference type="Rhea" id="RHEA:53148"/>
        <dbReference type="Rhea" id="RHEA-COMP:11964"/>
        <dbReference type="Rhea" id="RHEA-COMP:11965"/>
        <dbReference type="ChEBI" id="CHEBI:2700"/>
        <dbReference type="ChEBI" id="CHEBI:15377"/>
        <dbReference type="ChEBI" id="CHEBI:15378"/>
        <dbReference type="ChEBI" id="CHEBI:15379"/>
        <dbReference type="ChEBI" id="CHEBI:57618"/>
        <dbReference type="ChEBI" id="CHEBI:58210"/>
        <dbReference type="ChEBI" id="CHEBI:136991"/>
    </reaction>
    <physiologicalReaction direction="left-to-right" evidence="9">
        <dbReference type="Rhea" id="RHEA:53149"/>
    </physiologicalReaction>
</comment>
<comment type="cofactor">
    <cofactor evidence="1">
        <name>heme</name>
        <dbReference type="ChEBI" id="CHEBI:30413"/>
    </cofactor>
</comment>
<comment type="biophysicochemical properties">
    <kinetics>
        <KM evidence="5">65 uM for N-(5Z,8Z,11Z,14Z-eicosatetraenoyl)-ethanolamine (14,15 epoxidation)</KM>
    </kinetics>
</comment>
<comment type="subcellular location">
    <subcellularLocation>
        <location evidence="2">Endoplasmic reticulum membrane</location>
        <topology evidence="3">Single-pass membrane protein</topology>
    </subcellularLocation>
    <subcellularLocation>
        <location evidence="2">Microsome membrane</location>
        <topology evidence="3">Single-pass membrane protein</topology>
    </subcellularLocation>
</comment>
<comment type="alternative products">
    <event type="alternative splicing"/>
    <isoform>
        <id>Q8N118-1</id>
        <name>1</name>
        <sequence type="displayed"/>
    </isoform>
    <isoform>
        <id>Q8N118-2</id>
        <name>2</name>
        <sequence type="described" ref="VSP_045890"/>
    </isoform>
    <isoform>
        <id>Q8N118-3</id>
        <name>3</name>
        <sequence type="described" ref="VSP_045889"/>
    </isoform>
</comment>
<comment type="tissue specificity">
    <text evidence="4 5">Expressed in brain, heart, kidney and skin and, at lower levels, in skeletal muscle and liver (PubMed:16478468, PubMed:18549450). In the brain, high levels are detected in amygdala and lower levels in globus pallidus and cerebellum (PubMed:18549450). In the heart, very high levels in aorta, but very low levels in other heart regions (PubMed:16478468, PubMed:18549450). Also expressed in breast, prostate and colon (PubMed:18549450).</text>
</comment>
<comment type="developmental stage">
    <text evidence="5">Expressed in fetal liver and aorta.</text>
</comment>
<comment type="similarity">
    <text evidence="8">Belongs to the cytochrome P450 family.</text>
</comment>
<accession>Q8N118</accession>
<accession>G3V1U1</accession>
<accession>Q5VVE5</accession>
<accession>Q6ZN67</accession>
<accession>Q8NAZ3</accession>
<organism>
    <name type="scientific">Homo sapiens</name>
    <name type="common">Human</name>
    <dbReference type="NCBI Taxonomy" id="9606"/>
    <lineage>
        <taxon>Eukaryota</taxon>
        <taxon>Metazoa</taxon>
        <taxon>Chordata</taxon>
        <taxon>Craniata</taxon>
        <taxon>Vertebrata</taxon>
        <taxon>Euteleostomi</taxon>
        <taxon>Mammalia</taxon>
        <taxon>Eutheria</taxon>
        <taxon>Euarchontoglires</taxon>
        <taxon>Primates</taxon>
        <taxon>Haplorrhini</taxon>
        <taxon>Catarrhini</taxon>
        <taxon>Hominidae</taxon>
        <taxon>Homo</taxon>
    </lineage>
</organism>
<gene>
    <name evidence="7 10" type="primary">CYP4X1</name>
    <name type="ORF">UNQ1929/PRO4404</name>
</gene>
<evidence type="ECO:0000250" key="1">
    <source>
        <dbReference type="UniProtKB" id="P51869"/>
    </source>
</evidence>
<evidence type="ECO:0000250" key="2">
    <source>
        <dbReference type="UniProtKB" id="Q6A152"/>
    </source>
</evidence>
<evidence type="ECO:0000255" key="3"/>
<evidence type="ECO:0000269" key="4">
    <source>
    </source>
</evidence>
<evidence type="ECO:0000269" key="5">
    <source>
    </source>
</evidence>
<evidence type="ECO:0000303" key="6">
    <source>
    </source>
</evidence>
<evidence type="ECO:0000303" key="7">
    <source>
    </source>
</evidence>
<evidence type="ECO:0000305" key="8"/>
<evidence type="ECO:0000305" key="9">
    <source>
    </source>
</evidence>
<evidence type="ECO:0000312" key="10">
    <source>
        <dbReference type="HGNC" id="HGNC:20244"/>
    </source>
</evidence>
<proteinExistence type="evidence at protein level"/>
<protein>
    <recommendedName>
        <fullName evidence="7">Cytochrome P450 4X1</fullName>
        <ecNumber evidence="5">1.14.14.-</ecNumber>
    </recommendedName>
    <alternativeName>
        <fullName>CYPIVX1</fullName>
    </alternativeName>
</protein>